<organism>
    <name type="scientific">Exiguobacterium sibiricum (strain DSM 17290 / CCUG 55495 / CIP 109462 / JCM 13490 / 255-15)</name>
    <dbReference type="NCBI Taxonomy" id="262543"/>
    <lineage>
        <taxon>Bacteria</taxon>
        <taxon>Bacillati</taxon>
        <taxon>Bacillota</taxon>
        <taxon>Bacilli</taxon>
        <taxon>Bacillales</taxon>
        <taxon>Bacillales Family XII. Incertae Sedis</taxon>
        <taxon>Exiguobacterium</taxon>
    </lineage>
</organism>
<reference key="1">
    <citation type="submission" date="2008-04" db="EMBL/GenBank/DDBJ databases">
        <title>Complete sequence of chromosome of Exiguobacterium sibiricum 255-15.</title>
        <authorList>
            <consortium name="US DOE Joint Genome Institute"/>
            <person name="Copeland A."/>
            <person name="Lucas S."/>
            <person name="Lapidus A."/>
            <person name="Glavina del Rio T."/>
            <person name="Dalin E."/>
            <person name="Tice H."/>
            <person name="Bruce D."/>
            <person name="Goodwin L."/>
            <person name="Pitluck S."/>
            <person name="Kiss H."/>
            <person name="Chertkov O."/>
            <person name="Monk C."/>
            <person name="Brettin T."/>
            <person name="Detter J.C."/>
            <person name="Han C."/>
            <person name="Kuske C.R."/>
            <person name="Schmutz J."/>
            <person name="Larimer F."/>
            <person name="Land M."/>
            <person name="Hauser L."/>
            <person name="Kyrpides N."/>
            <person name="Mikhailova N."/>
            <person name="Vishnivetskaya T."/>
            <person name="Rodrigues D.F."/>
            <person name="Gilichinsky D."/>
            <person name="Tiedje J."/>
            <person name="Richardson P."/>
        </authorList>
    </citation>
    <scope>NUCLEOTIDE SEQUENCE [LARGE SCALE GENOMIC DNA]</scope>
    <source>
        <strain>DSM 17290 / CCUG 55495 / CIP 109462 / JCM 13490 / 255-15</strain>
    </source>
</reference>
<dbReference type="EC" id="3.1.3.87" evidence="1"/>
<dbReference type="EMBL" id="CP001022">
    <property type="protein sequence ID" value="ACB59911.1"/>
    <property type="molecule type" value="Genomic_DNA"/>
</dbReference>
<dbReference type="RefSeq" id="WP_012369335.1">
    <property type="nucleotide sequence ID" value="NC_010556.1"/>
</dbReference>
<dbReference type="SMR" id="B1YIY1"/>
<dbReference type="STRING" id="262543.Exig_0429"/>
<dbReference type="KEGG" id="esi:Exig_0429"/>
<dbReference type="eggNOG" id="COG4359">
    <property type="taxonomic scope" value="Bacteria"/>
</dbReference>
<dbReference type="HOGENOM" id="CLU_058495_2_1_9"/>
<dbReference type="OrthoDB" id="9804940at2"/>
<dbReference type="UniPathway" id="UPA00904">
    <property type="reaction ID" value="UER00877"/>
</dbReference>
<dbReference type="Proteomes" id="UP000001681">
    <property type="component" value="Chromosome"/>
</dbReference>
<dbReference type="GO" id="GO:0005737">
    <property type="term" value="C:cytoplasm"/>
    <property type="evidence" value="ECO:0007669"/>
    <property type="project" value="TreeGrafter"/>
</dbReference>
<dbReference type="GO" id="GO:0043716">
    <property type="term" value="F:2-hydroxy-3-keto-5-methylthiopentenyl-1-phosphate phosphatase activity"/>
    <property type="evidence" value="ECO:0007669"/>
    <property type="project" value="UniProtKB-UniRule"/>
</dbReference>
<dbReference type="GO" id="GO:0036424">
    <property type="term" value="F:L-phosphoserine phosphatase activity"/>
    <property type="evidence" value="ECO:0007669"/>
    <property type="project" value="TreeGrafter"/>
</dbReference>
<dbReference type="GO" id="GO:0000287">
    <property type="term" value="F:magnesium ion binding"/>
    <property type="evidence" value="ECO:0007669"/>
    <property type="project" value="TreeGrafter"/>
</dbReference>
<dbReference type="GO" id="GO:0019509">
    <property type="term" value="P:L-methionine salvage from methylthioadenosine"/>
    <property type="evidence" value="ECO:0007669"/>
    <property type="project" value="UniProtKB-UniRule"/>
</dbReference>
<dbReference type="GO" id="GO:0006564">
    <property type="term" value="P:L-serine biosynthetic process"/>
    <property type="evidence" value="ECO:0007669"/>
    <property type="project" value="TreeGrafter"/>
</dbReference>
<dbReference type="CDD" id="cd07524">
    <property type="entry name" value="HAD_Pase"/>
    <property type="match status" value="1"/>
</dbReference>
<dbReference type="Gene3D" id="3.90.1470.20">
    <property type="match status" value="1"/>
</dbReference>
<dbReference type="Gene3D" id="3.40.50.1000">
    <property type="entry name" value="HAD superfamily/HAD-like"/>
    <property type="match status" value="1"/>
</dbReference>
<dbReference type="HAMAP" id="MF_01680">
    <property type="entry name" value="Salvage_MtnX"/>
    <property type="match status" value="1"/>
</dbReference>
<dbReference type="InterPro" id="IPR050582">
    <property type="entry name" value="HAD-like_SerB"/>
</dbReference>
<dbReference type="InterPro" id="IPR036412">
    <property type="entry name" value="HAD-like_sf"/>
</dbReference>
<dbReference type="InterPro" id="IPR017718">
    <property type="entry name" value="HAD-SF_hydro_IB_MtnX"/>
</dbReference>
<dbReference type="InterPro" id="IPR006384">
    <property type="entry name" value="HAD_hydro_PyrdxlP_Pase-like"/>
</dbReference>
<dbReference type="InterPro" id="IPR023214">
    <property type="entry name" value="HAD_sf"/>
</dbReference>
<dbReference type="NCBIfam" id="TIGR01489">
    <property type="entry name" value="DKMTPPase-SF"/>
    <property type="match status" value="1"/>
</dbReference>
<dbReference type="NCBIfam" id="TIGR01488">
    <property type="entry name" value="HAD-SF-IB"/>
    <property type="match status" value="1"/>
</dbReference>
<dbReference type="NCBIfam" id="NF007103">
    <property type="entry name" value="PRK09552.1"/>
    <property type="match status" value="1"/>
</dbReference>
<dbReference type="PANTHER" id="PTHR43344">
    <property type="entry name" value="PHOSPHOSERINE PHOSPHATASE"/>
    <property type="match status" value="1"/>
</dbReference>
<dbReference type="PANTHER" id="PTHR43344:SF21">
    <property type="entry name" value="POLYOL PHOSPHATE PHOSPHATASE PYP1"/>
    <property type="match status" value="1"/>
</dbReference>
<dbReference type="Pfam" id="PF12710">
    <property type="entry name" value="HAD"/>
    <property type="match status" value="1"/>
</dbReference>
<dbReference type="SUPFAM" id="SSF56784">
    <property type="entry name" value="HAD-like"/>
    <property type="match status" value="1"/>
</dbReference>
<comment type="function">
    <text evidence="1">Dephosphorylates 2-hydroxy-3-keto-5-methylthiopentenyl-1-phosphate (HK-MTPenyl-1-P) yielding 1,2-dihydroxy-3-keto-5-methylthiopentene (DHK-MTPene).</text>
</comment>
<comment type="catalytic activity">
    <reaction evidence="1">
        <text>2-hydroxy-5-methylsulfanyl-3-oxopent-1-enyl phosphate + H2O = 1,2-dihydroxy-5-(methylsulfanyl)pent-1-en-3-one + phosphate</text>
        <dbReference type="Rhea" id="RHEA:14481"/>
        <dbReference type="ChEBI" id="CHEBI:15377"/>
        <dbReference type="ChEBI" id="CHEBI:43474"/>
        <dbReference type="ChEBI" id="CHEBI:49252"/>
        <dbReference type="ChEBI" id="CHEBI:59505"/>
        <dbReference type="EC" id="3.1.3.87"/>
    </reaction>
</comment>
<comment type="pathway">
    <text evidence="1">Amino-acid biosynthesis; L-methionine biosynthesis via salvage pathway; L-methionine from S-methyl-5-thio-alpha-D-ribose 1-phosphate: step 4/6.</text>
</comment>
<comment type="similarity">
    <text evidence="1">Belongs to the HAD-like hydrolase superfamily. MtnX family.</text>
</comment>
<keyword id="KW-0028">Amino-acid biosynthesis</keyword>
<keyword id="KW-0378">Hydrolase</keyword>
<keyword id="KW-0486">Methionine biosynthesis</keyword>
<keyword id="KW-1185">Reference proteome</keyword>
<sequence length="219" mass="24508">MTIRILCDFDGTVTEHDNIIALMTEFAPPEAFEPLKKGVLDQSLSIQSGVGQMFRLLPSDRKQDYIDFLEQRAVIRPGFKTLLAFAKSNGIDFAIVSGGIDFFVQPILQELLTDEAIYCNGSDFSGETIRIEWPHTCDAACNNQCGCCKTSIARKLKQDGDIIVTIGDSVTDFELAKQADHVYARDYLITLCEQHGIAYTPFETFYDIVDHLQTTEVYA</sequence>
<accession>B1YIY1</accession>
<protein>
    <recommendedName>
        <fullName evidence="1">2-hydroxy-3-keto-5-methylthiopentenyl-1-phosphate phosphatase</fullName>
        <shortName evidence="1">HK-MTPenyl-1-P phosphatase</shortName>
        <ecNumber evidence="1">3.1.3.87</ecNumber>
    </recommendedName>
</protein>
<feature type="chain" id="PRO_0000357484" description="2-hydroxy-3-keto-5-methylthiopentenyl-1-phosphate phosphatase">
    <location>
        <begin position="1"/>
        <end position="219"/>
    </location>
</feature>
<proteinExistence type="inferred from homology"/>
<name>MTNX_EXIS2</name>
<evidence type="ECO:0000255" key="1">
    <source>
        <dbReference type="HAMAP-Rule" id="MF_01680"/>
    </source>
</evidence>
<gene>
    <name evidence="1" type="primary">mtnX</name>
    <name type="ordered locus">Exig_0429</name>
</gene>